<gene>
    <name evidence="1" type="primary">rimP</name>
    <name type="ordered locus">STH1518</name>
</gene>
<reference key="1">
    <citation type="journal article" date="2004" name="Nucleic Acids Res.">
        <title>Genome sequence of Symbiobacterium thermophilum, an uncultivable bacterium that depends on microbial commensalism.</title>
        <authorList>
            <person name="Ueda K."/>
            <person name="Yamashita A."/>
            <person name="Ishikawa J."/>
            <person name="Shimada M."/>
            <person name="Watsuji T."/>
            <person name="Morimura K."/>
            <person name="Ikeda H."/>
            <person name="Hattori M."/>
            <person name="Beppu T."/>
        </authorList>
    </citation>
    <scope>NUCLEOTIDE SEQUENCE [LARGE SCALE GENOMIC DNA]</scope>
    <source>
        <strain>DSM 24528 / JCM 14929 / IAM 14863 / T</strain>
    </source>
</reference>
<protein>
    <recommendedName>
        <fullName evidence="1">Ribosome maturation factor RimP</fullName>
    </recommendedName>
</protein>
<sequence length="160" mass="17542">MAKSGKRLEELVEELAAPHAAALGLELVGVELVKEGAYRYLRVYIDKEGGVGFDDCEALSRVVDAQLDEILPNPPYDFFEVSSPGLDRPLKREADFARYVGHKVVVTTYAPVDGQKSFVGELQGLVDGRVTLTLTEGKGRGQTIALDRKQVASARLYVEF</sequence>
<organism>
    <name type="scientific">Symbiobacterium thermophilum (strain DSM 24528 / JCM 14929 / IAM 14863 / T)</name>
    <dbReference type="NCBI Taxonomy" id="292459"/>
    <lineage>
        <taxon>Bacteria</taxon>
        <taxon>Bacillati</taxon>
        <taxon>Bacillota</taxon>
        <taxon>Clostridia</taxon>
        <taxon>Eubacteriales</taxon>
        <taxon>Symbiobacteriaceae</taxon>
        <taxon>Symbiobacterium</taxon>
    </lineage>
</organism>
<comment type="function">
    <text evidence="1">Required for maturation of 30S ribosomal subunits.</text>
</comment>
<comment type="subcellular location">
    <subcellularLocation>
        <location evidence="1">Cytoplasm</location>
    </subcellularLocation>
</comment>
<comment type="similarity">
    <text evidence="1">Belongs to the RimP family.</text>
</comment>
<feature type="chain" id="PRO_0000229285" description="Ribosome maturation factor RimP">
    <location>
        <begin position="1"/>
        <end position="160"/>
    </location>
</feature>
<evidence type="ECO:0000255" key="1">
    <source>
        <dbReference type="HAMAP-Rule" id="MF_01077"/>
    </source>
</evidence>
<keyword id="KW-0963">Cytoplasm</keyword>
<keyword id="KW-1185">Reference proteome</keyword>
<keyword id="KW-0690">Ribosome biogenesis</keyword>
<proteinExistence type="inferred from homology"/>
<name>RIMP_SYMTH</name>
<accession>Q67P90</accession>
<dbReference type="EMBL" id="AP006840">
    <property type="protein sequence ID" value="BAD40503.1"/>
    <property type="molecule type" value="Genomic_DNA"/>
</dbReference>
<dbReference type="RefSeq" id="WP_011195648.1">
    <property type="nucleotide sequence ID" value="NC_006177.1"/>
</dbReference>
<dbReference type="SMR" id="Q67P90"/>
<dbReference type="STRING" id="292459.STH1518"/>
<dbReference type="KEGG" id="sth:STH1518"/>
<dbReference type="eggNOG" id="COG0779">
    <property type="taxonomic scope" value="Bacteria"/>
</dbReference>
<dbReference type="HOGENOM" id="CLU_070525_2_2_9"/>
<dbReference type="OrthoDB" id="9805006at2"/>
<dbReference type="Proteomes" id="UP000000417">
    <property type="component" value="Chromosome"/>
</dbReference>
<dbReference type="GO" id="GO:0005829">
    <property type="term" value="C:cytosol"/>
    <property type="evidence" value="ECO:0007669"/>
    <property type="project" value="TreeGrafter"/>
</dbReference>
<dbReference type="GO" id="GO:0000028">
    <property type="term" value="P:ribosomal small subunit assembly"/>
    <property type="evidence" value="ECO:0007669"/>
    <property type="project" value="TreeGrafter"/>
</dbReference>
<dbReference type="GO" id="GO:0006412">
    <property type="term" value="P:translation"/>
    <property type="evidence" value="ECO:0007669"/>
    <property type="project" value="TreeGrafter"/>
</dbReference>
<dbReference type="CDD" id="cd01734">
    <property type="entry name" value="YlxS_C"/>
    <property type="match status" value="1"/>
</dbReference>
<dbReference type="FunFam" id="3.30.300.70:FF:000001">
    <property type="entry name" value="Ribosome maturation factor RimP"/>
    <property type="match status" value="1"/>
</dbReference>
<dbReference type="Gene3D" id="2.30.30.180">
    <property type="entry name" value="Ribosome maturation factor RimP, C-terminal domain"/>
    <property type="match status" value="1"/>
</dbReference>
<dbReference type="Gene3D" id="3.30.300.70">
    <property type="entry name" value="RimP-like superfamily, N-terminal"/>
    <property type="match status" value="1"/>
</dbReference>
<dbReference type="HAMAP" id="MF_01077">
    <property type="entry name" value="RimP"/>
    <property type="match status" value="1"/>
</dbReference>
<dbReference type="InterPro" id="IPR003728">
    <property type="entry name" value="Ribosome_maturation_RimP"/>
</dbReference>
<dbReference type="InterPro" id="IPR028998">
    <property type="entry name" value="RimP_C"/>
</dbReference>
<dbReference type="InterPro" id="IPR036847">
    <property type="entry name" value="RimP_C_sf"/>
</dbReference>
<dbReference type="InterPro" id="IPR028989">
    <property type="entry name" value="RimP_N"/>
</dbReference>
<dbReference type="InterPro" id="IPR035956">
    <property type="entry name" value="RimP_N_sf"/>
</dbReference>
<dbReference type="PANTHER" id="PTHR33867">
    <property type="entry name" value="RIBOSOME MATURATION FACTOR RIMP"/>
    <property type="match status" value="1"/>
</dbReference>
<dbReference type="PANTHER" id="PTHR33867:SF1">
    <property type="entry name" value="RIBOSOME MATURATION FACTOR RIMP"/>
    <property type="match status" value="1"/>
</dbReference>
<dbReference type="Pfam" id="PF17384">
    <property type="entry name" value="DUF150_C"/>
    <property type="match status" value="1"/>
</dbReference>
<dbReference type="Pfam" id="PF02576">
    <property type="entry name" value="RimP_N"/>
    <property type="match status" value="1"/>
</dbReference>
<dbReference type="SUPFAM" id="SSF74942">
    <property type="entry name" value="YhbC-like, C-terminal domain"/>
    <property type="match status" value="1"/>
</dbReference>
<dbReference type="SUPFAM" id="SSF75420">
    <property type="entry name" value="YhbC-like, N-terminal domain"/>
    <property type="match status" value="1"/>
</dbReference>